<proteinExistence type="inferred from homology"/>
<organism>
    <name type="scientific">Ehrlichia canis (strain Jake)</name>
    <dbReference type="NCBI Taxonomy" id="269484"/>
    <lineage>
        <taxon>Bacteria</taxon>
        <taxon>Pseudomonadati</taxon>
        <taxon>Pseudomonadota</taxon>
        <taxon>Alphaproteobacteria</taxon>
        <taxon>Rickettsiales</taxon>
        <taxon>Anaplasmataceae</taxon>
        <taxon>Ehrlichia</taxon>
    </lineage>
</organism>
<protein>
    <recommendedName>
        <fullName evidence="1">Large ribosomal subunit protein bL27</fullName>
    </recommendedName>
    <alternativeName>
        <fullName evidence="3">50S ribosomal protein L27</fullName>
    </alternativeName>
</protein>
<name>RL27_EHRCJ</name>
<evidence type="ECO:0000255" key="1">
    <source>
        <dbReference type="HAMAP-Rule" id="MF_00539"/>
    </source>
</evidence>
<evidence type="ECO:0000256" key="2">
    <source>
        <dbReference type="SAM" id="MobiDB-lite"/>
    </source>
</evidence>
<evidence type="ECO:0000305" key="3"/>
<keyword id="KW-0687">Ribonucleoprotein</keyword>
<keyword id="KW-0689">Ribosomal protein</keyword>
<feature type="chain" id="PRO_1000017472" description="Large ribosomal subunit protein bL27">
    <location>
        <begin position="1"/>
        <end position="88"/>
    </location>
</feature>
<feature type="region of interest" description="Disordered" evidence="2">
    <location>
        <begin position="1"/>
        <end position="24"/>
    </location>
</feature>
<reference key="1">
    <citation type="journal article" date="2006" name="J. Bacteriol.">
        <title>The genome of the obligately intracellular bacterium Ehrlichia canis reveals themes of complex membrane structure and immune evasion strategies.</title>
        <authorList>
            <person name="Mavromatis K."/>
            <person name="Doyle C.K."/>
            <person name="Lykidis A."/>
            <person name="Ivanova N."/>
            <person name="Francino M.P."/>
            <person name="Chain P."/>
            <person name="Shin M."/>
            <person name="Malfatti S."/>
            <person name="Larimer F."/>
            <person name="Copeland A."/>
            <person name="Detter J.C."/>
            <person name="Land M."/>
            <person name="Richardson P.M."/>
            <person name="Yu X.J."/>
            <person name="Walker D.H."/>
            <person name="McBride J.W."/>
            <person name="Kyrpides N.C."/>
        </authorList>
    </citation>
    <scope>NUCLEOTIDE SEQUENCE [LARGE SCALE GENOMIC DNA]</scope>
    <source>
        <strain>Jake</strain>
    </source>
</reference>
<accession>Q3YRY1</accession>
<dbReference type="EMBL" id="CP000107">
    <property type="protein sequence ID" value="AAZ68524.1"/>
    <property type="molecule type" value="Genomic_DNA"/>
</dbReference>
<dbReference type="RefSeq" id="WP_011304602.1">
    <property type="nucleotide sequence ID" value="NC_007354.1"/>
</dbReference>
<dbReference type="SMR" id="Q3YRY1"/>
<dbReference type="FunCoup" id="Q3YRY1">
    <property type="interactions" value="338"/>
</dbReference>
<dbReference type="STRING" id="269484.Ecaj_0487"/>
<dbReference type="KEGG" id="ecn:Ecaj_0487"/>
<dbReference type="eggNOG" id="COG0211">
    <property type="taxonomic scope" value="Bacteria"/>
</dbReference>
<dbReference type="HOGENOM" id="CLU_095424_4_1_5"/>
<dbReference type="InParanoid" id="Q3YRY1"/>
<dbReference type="Proteomes" id="UP000000435">
    <property type="component" value="Chromosome"/>
</dbReference>
<dbReference type="GO" id="GO:1990904">
    <property type="term" value="C:ribonucleoprotein complex"/>
    <property type="evidence" value="ECO:0007669"/>
    <property type="project" value="UniProtKB-KW"/>
</dbReference>
<dbReference type="GO" id="GO:0005840">
    <property type="term" value="C:ribosome"/>
    <property type="evidence" value="ECO:0007669"/>
    <property type="project" value="UniProtKB-KW"/>
</dbReference>
<dbReference type="GO" id="GO:0003735">
    <property type="term" value="F:structural constituent of ribosome"/>
    <property type="evidence" value="ECO:0007669"/>
    <property type="project" value="InterPro"/>
</dbReference>
<dbReference type="GO" id="GO:0006412">
    <property type="term" value="P:translation"/>
    <property type="evidence" value="ECO:0007669"/>
    <property type="project" value="UniProtKB-UniRule"/>
</dbReference>
<dbReference type="FunFam" id="2.40.50.100:FF:000020">
    <property type="entry name" value="50S ribosomal protein L27"/>
    <property type="match status" value="1"/>
</dbReference>
<dbReference type="Gene3D" id="2.40.50.100">
    <property type="match status" value="1"/>
</dbReference>
<dbReference type="HAMAP" id="MF_00539">
    <property type="entry name" value="Ribosomal_bL27"/>
    <property type="match status" value="1"/>
</dbReference>
<dbReference type="InterPro" id="IPR001684">
    <property type="entry name" value="Ribosomal_bL27"/>
</dbReference>
<dbReference type="InterPro" id="IPR018261">
    <property type="entry name" value="Ribosomal_bL27_CS"/>
</dbReference>
<dbReference type="NCBIfam" id="TIGR00062">
    <property type="entry name" value="L27"/>
    <property type="match status" value="1"/>
</dbReference>
<dbReference type="PANTHER" id="PTHR15893:SF0">
    <property type="entry name" value="LARGE RIBOSOMAL SUBUNIT PROTEIN BL27M"/>
    <property type="match status" value="1"/>
</dbReference>
<dbReference type="PANTHER" id="PTHR15893">
    <property type="entry name" value="RIBOSOMAL PROTEIN L27"/>
    <property type="match status" value="1"/>
</dbReference>
<dbReference type="Pfam" id="PF01016">
    <property type="entry name" value="Ribosomal_L27"/>
    <property type="match status" value="1"/>
</dbReference>
<dbReference type="PRINTS" id="PR00063">
    <property type="entry name" value="RIBOSOMALL27"/>
</dbReference>
<dbReference type="SUPFAM" id="SSF110324">
    <property type="entry name" value="Ribosomal L27 protein-like"/>
    <property type="match status" value="1"/>
</dbReference>
<dbReference type="PROSITE" id="PS00831">
    <property type="entry name" value="RIBOSOMAL_L27"/>
    <property type="match status" value="1"/>
</dbReference>
<sequence length="88" mass="9580">MATKKSGGSSGNGRDSRGRRLGVKKFGSEKVIPGNIIIRQRGTKYHPGKNVGMGKDHTIFSKISGFVHFRKGVFNKTFVDVLEISSVS</sequence>
<comment type="similarity">
    <text evidence="1">Belongs to the bacterial ribosomal protein bL27 family.</text>
</comment>
<gene>
    <name evidence="1" type="primary">rpmA</name>
    <name type="ordered locus">Ecaj_0487</name>
</gene>